<feature type="chain" id="PRO_0000317858" description="Autophagy protein 5">
    <location>
        <begin position="1"/>
        <end position="311"/>
    </location>
</feature>
<feature type="region of interest" description="Disordered" evidence="2">
    <location>
        <begin position="102"/>
        <end position="122"/>
    </location>
</feature>
<feature type="cross-link" description="Glycyl lysine isopeptide (Lys-Gly) (interchain with G-Cter in ATG12)" evidence="1">
    <location>
        <position position="159"/>
    </location>
</feature>
<comment type="function">
    <text evidence="1">Involved in cytoplasm to vacuole transport (Cvt) and autophagic vesicle formation. Autophagy is essential for maintenance of amino acid levels and protein synthesis under nitrogen starvation. Required for selective autophagic degradation of the nucleus (nucleophagy). Also required for mitophagy, which eliminates defective or superfluous mitochondria in order to fulfill cellular energy requirements and prevent excess ROS production. Conjugation with ATG12, through a ubiquitin-like conjugating system involving ATG7 as an E1-like activating enzyme and ATG10 as an E2-like conjugating enzyme, is essential for its function. The ATG12-ATG5 conjugate acts as an E3-like enzyme which is required for lipidation of ATG8 and ATG8 association to the vesicle membranes (By similarity).</text>
</comment>
<comment type="subunit">
    <text evidence="1">Conjugated with ATG12.</text>
</comment>
<comment type="subcellular location">
    <subcellularLocation>
        <location evidence="1">Preautophagosomal structure membrane</location>
        <topology evidence="1">Peripheral membrane protein</topology>
    </subcellularLocation>
</comment>
<comment type="PTM">
    <text evidence="1">Conjugated to ATG12; which is essential for autophagy.</text>
</comment>
<comment type="similarity">
    <text evidence="3">Belongs to the ATG5 family.</text>
</comment>
<comment type="sequence caution" evidence="3">
    <conflict type="erroneous gene model prediction">
        <sequence resource="EMBL-CDS" id="EAT88681"/>
    </conflict>
</comment>
<evidence type="ECO:0000250" key="1"/>
<evidence type="ECO:0000256" key="2">
    <source>
        <dbReference type="SAM" id="MobiDB-lite"/>
    </source>
</evidence>
<evidence type="ECO:0000305" key="3"/>
<reference key="1">
    <citation type="journal article" date="2007" name="Plant Cell">
        <title>Dothideomycete-plant interactions illuminated by genome sequencing and EST analysis of the wheat pathogen Stagonospora nodorum.</title>
        <authorList>
            <person name="Hane J.K."/>
            <person name="Lowe R.G.T."/>
            <person name="Solomon P.S."/>
            <person name="Tan K.-C."/>
            <person name="Schoch C.L."/>
            <person name="Spatafora J.W."/>
            <person name="Crous P.W."/>
            <person name="Kodira C.D."/>
            <person name="Birren B.W."/>
            <person name="Galagan J.E."/>
            <person name="Torriani S.F.F."/>
            <person name="McDonald B.A."/>
            <person name="Oliver R.P."/>
        </authorList>
    </citation>
    <scope>NUCLEOTIDE SEQUENCE [LARGE SCALE GENOMIC DNA]</scope>
    <source>
        <strain>SN15 / ATCC MYA-4574 / FGSC 10173</strain>
    </source>
</reference>
<accession>Q0UXN8</accession>
<protein>
    <recommendedName>
        <fullName>Autophagy protein 5</fullName>
    </recommendedName>
</protein>
<keyword id="KW-0072">Autophagy</keyword>
<keyword id="KW-1017">Isopeptide bond</keyword>
<keyword id="KW-0472">Membrane</keyword>
<keyword id="KW-0653">Protein transport</keyword>
<keyword id="KW-0813">Transport</keyword>
<keyword id="KW-0832">Ubl conjugation</keyword>
<organism>
    <name type="scientific">Phaeosphaeria nodorum (strain SN15 / ATCC MYA-4574 / FGSC 10173)</name>
    <name type="common">Glume blotch fungus</name>
    <name type="synonym">Parastagonospora nodorum</name>
    <dbReference type="NCBI Taxonomy" id="321614"/>
    <lineage>
        <taxon>Eukaryota</taxon>
        <taxon>Fungi</taxon>
        <taxon>Dikarya</taxon>
        <taxon>Ascomycota</taxon>
        <taxon>Pezizomycotina</taxon>
        <taxon>Dothideomycetes</taxon>
        <taxon>Pleosporomycetidae</taxon>
        <taxon>Pleosporales</taxon>
        <taxon>Pleosporineae</taxon>
        <taxon>Phaeosphaeriaceae</taxon>
        <taxon>Parastagonospora</taxon>
    </lineage>
</organism>
<name>ATG5_PHANO</name>
<dbReference type="EMBL" id="CH445329">
    <property type="protein sequence ID" value="EAT88681.2"/>
    <property type="status" value="ALT_SEQ"/>
    <property type="molecule type" value="Genomic_DNA"/>
</dbReference>
<dbReference type="RefSeq" id="XP_001794039.1">
    <property type="nucleotide sequence ID" value="XM_001793987.1"/>
</dbReference>
<dbReference type="SMR" id="Q0UXN8"/>
<dbReference type="FunCoup" id="Q0UXN8">
    <property type="interactions" value="306"/>
</dbReference>
<dbReference type="STRING" id="321614.Q0UXN8"/>
<dbReference type="GeneID" id="5970902"/>
<dbReference type="KEGG" id="pno:SNOG_03476"/>
<dbReference type="VEuPathDB" id="FungiDB:JI435_034760"/>
<dbReference type="eggNOG" id="KOG2976">
    <property type="taxonomic scope" value="Eukaryota"/>
</dbReference>
<dbReference type="InParanoid" id="Q0UXN8"/>
<dbReference type="OMA" id="SIQKAVW"/>
<dbReference type="OrthoDB" id="272162at2759"/>
<dbReference type="Proteomes" id="UP000001055">
    <property type="component" value="Unassembled WGS sequence"/>
</dbReference>
<dbReference type="GO" id="GO:0034274">
    <property type="term" value="C:Atg12-Atg5-Atg16 complex"/>
    <property type="evidence" value="ECO:0000318"/>
    <property type="project" value="GO_Central"/>
</dbReference>
<dbReference type="GO" id="GO:0005776">
    <property type="term" value="C:autophagosome"/>
    <property type="evidence" value="ECO:0000318"/>
    <property type="project" value="GO_Central"/>
</dbReference>
<dbReference type="GO" id="GO:0061908">
    <property type="term" value="C:phagophore"/>
    <property type="evidence" value="ECO:0000318"/>
    <property type="project" value="GO_Central"/>
</dbReference>
<dbReference type="GO" id="GO:0034045">
    <property type="term" value="C:phagophore assembly site membrane"/>
    <property type="evidence" value="ECO:0000318"/>
    <property type="project" value="GO_Central"/>
</dbReference>
<dbReference type="GO" id="GO:0035973">
    <property type="term" value="P:aggrephagy"/>
    <property type="evidence" value="ECO:0000318"/>
    <property type="project" value="GO_Central"/>
</dbReference>
<dbReference type="GO" id="GO:0000045">
    <property type="term" value="P:autophagosome assembly"/>
    <property type="evidence" value="ECO:0000318"/>
    <property type="project" value="GO_Central"/>
</dbReference>
<dbReference type="GO" id="GO:0006995">
    <property type="term" value="P:cellular response to nitrogen starvation"/>
    <property type="evidence" value="ECO:0000318"/>
    <property type="project" value="GO_Central"/>
</dbReference>
<dbReference type="GO" id="GO:0000423">
    <property type="term" value="P:mitophagy"/>
    <property type="evidence" value="ECO:0000318"/>
    <property type="project" value="GO_Central"/>
</dbReference>
<dbReference type="GO" id="GO:0034727">
    <property type="term" value="P:piecemeal microautophagy of the nucleus"/>
    <property type="evidence" value="ECO:0000318"/>
    <property type="project" value="GO_Central"/>
</dbReference>
<dbReference type="GO" id="GO:0015031">
    <property type="term" value="P:protein transport"/>
    <property type="evidence" value="ECO:0007669"/>
    <property type="project" value="UniProtKB-KW"/>
</dbReference>
<dbReference type="FunFam" id="3.10.20.620:FF:000004">
    <property type="entry name" value="Autophagy protein 5"/>
    <property type="match status" value="1"/>
</dbReference>
<dbReference type="FunFam" id="3.10.20.90:FF:000290">
    <property type="entry name" value="Autophagy protein 5"/>
    <property type="match status" value="1"/>
</dbReference>
<dbReference type="Gene3D" id="3.10.20.620">
    <property type="match status" value="1"/>
</dbReference>
<dbReference type="Gene3D" id="1.10.246.190">
    <property type="entry name" value="Autophagy protein Apg5, helix rich domain"/>
    <property type="match status" value="1"/>
</dbReference>
<dbReference type="Gene3D" id="3.10.20.90">
    <property type="entry name" value="Phosphatidylinositol 3-kinase Catalytic Subunit, Chain A, domain 1"/>
    <property type="match status" value="1"/>
</dbReference>
<dbReference type="InterPro" id="IPR007239">
    <property type="entry name" value="Atg5"/>
</dbReference>
<dbReference type="InterPro" id="IPR048940">
    <property type="entry name" value="ATG5_HBR"/>
</dbReference>
<dbReference type="InterPro" id="IPR042526">
    <property type="entry name" value="Atg5_HR"/>
</dbReference>
<dbReference type="InterPro" id="IPR048939">
    <property type="entry name" value="ATG5_UblA"/>
</dbReference>
<dbReference type="InterPro" id="IPR042527">
    <property type="entry name" value="Atg5_UblA_dom_sf"/>
</dbReference>
<dbReference type="InterPro" id="IPR048318">
    <property type="entry name" value="ATG5_UblB"/>
</dbReference>
<dbReference type="PANTHER" id="PTHR13040">
    <property type="entry name" value="AUTOPHAGY PROTEIN 5"/>
    <property type="match status" value="1"/>
</dbReference>
<dbReference type="PANTHER" id="PTHR13040:SF2">
    <property type="entry name" value="AUTOPHAGY PROTEIN 5"/>
    <property type="match status" value="1"/>
</dbReference>
<dbReference type="Pfam" id="PF20637">
    <property type="entry name" value="ATG5_HBR"/>
    <property type="match status" value="1"/>
</dbReference>
<dbReference type="Pfam" id="PF20638">
    <property type="entry name" value="ATG5_UblA"/>
    <property type="match status" value="1"/>
</dbReference>
<dbReference type="Pfam" id="PF04106">
    <property type="entry name" value="ATG5_UblB"/>
    <property type="match status" value="1"/>
</dbReference>
<gene>
    <name type="primary">ATG5</name>
    <name type="ORF">SNOG_03476</name>
</gene>
<proteinExistence type="inferred from homology"/>
<sequence>MSSREVTSRLREKVWNGSVPLEIRLHKGDCRTYDDSDAYLIQFPRLSYLALLIHKLHAFFAPSLIYPDIHPSDLWFSYEGVPLKWHYPLGLLYDLYSGAEPYHPSDSPPPSPTTPSKQDSKQPLPWRLTLHTSAYPTTQLIPLDNNNLQIHDLFIHSVKEADYLRTGTGKTVMFLSQADSTQLWDAVVKHDFALFNPINQKLLNPQGVNLRHLPVRLYLPHAGVDEEDRGMGSVRVVQSLVKVEVGSRQPQTIGTALNQILPTLFPSRRSALLAQAVLHGAVVPLGASVEELIRSVAYLDGWLHIAIVMMG</sequence>